<evidence type="ECO:0000255" key="1">
    <source>
        <dbReference type="HAMAP-Rule" id="MF_00750"/>
    </source>
</evidence>
<keyword id="KW-0274">FAD</keyword>
<keyword id="KW-0285">Flavoprotein</keyword>
<keyword id="KW-0520">NAD</keyword>
<keyword id="KW-0560">Oxidoreductase</keyword>
<keyword id="KW-1185">Reference proteome</keyword>
<proteinExistence type="inferred from homology"/>
<feature type="chain" id="PRO_1000046565" description="Oxygen-dependent choline dehydrogenase">
    <location>
        <begin position="1"/>
        <end position="549"/>
    </location>
</feature>
<feature type="active site" description="Proton acceptor" evidence="1">
    <location>
        <position position="465"/>
    </location>
</feature>
<feature type="binding site" evidence="1">
    <location>
        <begin position="4"/>
        <end position="33"/>
    </location>
    <ligand>
        <name>FAD</name>
        <dbReference type="ChEBI" id="CHEBI:57692"/>
    </ligand>
</feature>
<gene>
    <name evidence="1" type="primary">betA</name>
    <name type="ordered locus">Oant_2709</name>
</gene>
<name>BETA_BRUA4</name>
<comment type="function">
    <text evidence="1">Involved in the biosynthesis of the osmoprotectant glycine betaine. Catalyzes the oxidation of choline to betaine aldehyde and betaine aldehyde to glycine betaine at the same rate.</text>
</comment>
<comment type="catalytic activity">
    <reaction evidence="1">
        <text>choline + A = betaine aldehyde + AH2</text>
        <dbReference type="Rhea" id="RHEA:17433"/>
        <dbReference type="ChEBI" id="CHEBI:13193"/>
        <dbReference type="ChEBI" id="CHEBI:15354"/>
        <dbReference type="ChEBI" id="CHEBI:15710"/>
        <dbReference type="ChEBI" id="CHEBI:17499"/>
        <dbReference type="EC" id="1.1.99.1"/>
    </reaction>
</comment>
<comment type="catalytic activity">
    <reaction evidence="1">
        <text>betaine aldehyde + NAD(+) + H2O = glycine betaine + NADH + 2 H(+)</text>
        <dbReference type="Rhea" id="RHEA:15305"/>
        <dbReference type="ChEBI" id="CHEBI:15377"/>
        <dbReference type="ChEBI" id="CHEBI:15378"/>
        <dbReference type="ChEBI" id="CHEBI:15710"/>
        <dbReference type="ChEBI" id="CHEBI:17750"/>
        <dbReference type="ChEBI" id="CHEBI:57540"/>
        <dbReference type="ChEBI" id="CHEBI:57945"/>
        <dbReference type="EC" id="1.2.1.8"/>
    </reaction>
</comment>
<comment type="cofactor">
    <cofactor evidence="1">
        <name>FAD</name>
        <dbReference type="ChEBI" id="CHEBI:57692"/>
    </cofactor>
</comment>
<comment type="pathway">
    <text evidence="1">Amine and polyamine biosynthesis; betaine biosynthesis via choline pathway; betaine aldehyde from choline (cytochrome c reductase route): step 1/1.</text>
</comment>
<comment type="similarity">
    <text evidence="1">Belongs to the GMC oxidoreductase family.</text>
</comment>
<protein>
    <recommendedName>
        <fullName evidence="1">Oxygen-dependent choline dehydrogenase</fullName>
        <shortName evidence="1">CDH</shortName>
        <shortName evidence="1">CHD</shortName>
        <ecNumber evidence="1">1.1.99.1</ecNumber>
    </recommendedName>
    <alternativeName>
        <fullName evidence="1">Betaine aldehyde dehydrogenase</fullName>
        <shortName evidence="1">BADH</shortName>
        <ecNumber evidence="1">1.2.1.8</ecNumber>
    </alternativeName>
</protein>
<reference key="1">
    <citation type="journal article" date="2011" name="J. Bacteriol.">
        <title>Genome of Ochrobactrum anthropi ATCC 49188 T, a versatile opportunistic pathogen and symbiont of several eukaryotic hosts.</title>
        <authorList>
            <person name="Chain P.S."/>
            <person name="Lang D.M."/>
            <person name="Comerci D.J."/>
            <person name="Malfatti S.A."/>
            <person name="Vergez L.M."/>
            <person name="Shin M."/>
            <person name="Ugalde R.A."/>
            <person name="Garcia E."/>
            <person name="Tolmasky M.E."/>
        </authorList>
    </citation>
    <scope>NUCLEOTIDE SEQUENCE [LARGE SCALE GENOMIC DNA]</scope>
    <source>
        <strain>ATCC 49188 / DSM 6882 / CCUG 24695 / JCM 21032 / LMG 3331 / NBRC 15819 / NCTC 12168 / Alc 37</strain>
    </source>
</reference>
<organism>
    <name type="scientific">Brucella anthropi (strain ATCC 49188 / DSM 6882 / CCUG 24695 / JCM 21032 / LMG 3331 / NBRC 15819 / NCTC 12168 / Alc 37)</name>
    <name type="common">Ochrobactrum anthropi</name>
    <dbReference type="NCBI Taxonomy" id="439375"/>
    <lineage>
        <taxon>Bacteria</taxon>
        <taxon>Pseudomonadati</taxon>
        <taxon>Pseudomonadota</taxon>
        <taxon>Alphaproteobacteria</taxon>
        <taxon>Hyphomicrobiales</taxon>
        <taxon>Brucellaceae</taxon>
        <taxon>Brucella/Ochrobactrum group</taxon>
        <taxon>Brucella</taxon>
    </lineage>
</organism>
<sequence>MEADFVIIGSGSAGSAMAYRLSEDGRYSVIVIEYGVPDVGPLIQMPAALSFPMNMETYDWGFSTEPEPHIGGRSLVTPRGKVLGGSSSINGMVYVRGHARDYDHWSESGARGWAYADVLPYFKRMENSSGGQEGWRGTNGPLYIQRGKRDNPLFHAFVEAGHEAGFEVTEDYNGEKQEGFGPMEQTIHNGRRWSAANAYLKPALKRPNVKLVKGLARKIVLEGKRAVGVEIEAGRSFSTIRARREVIIAASSINSPKLLMLSGIGPAAQLKEHGIEVVADRPGVGQNLQDHLEVYIQQECTQPITLYSKLNLFSKAKIGAEWLFFKTGDGATNHFESAAFLRSKAGVEYPDIQYHFLPVAIRYDGKAAAQSHGFQAHVGPMRSKSRGSVTLRSANPREKPVIKFNYMSHEDDWADFRHCVRLTREIFGQAAFNPYRGAEIQPGAHVQSDDEIDNFIKEHVESAFHPCGTCKMGAVDDPMAVVDAECRVIGVEGLRVADSSIFPRITNGNLNGPSIMVGEKASDHILGRTPLARSDQEPWINPRWQVSDR</sequence>
<accession>A6X2G7</accession>
<dbReference type="EC" id="1.1.99.1" evidence="1"/>
<dbReference type="EC" id="1.2.1.8" evidence="1"/>
<dbReference type="EMBL" id="CP000758">
    <property type="protein sequence ID" value="ABS15421.1"/>
    <property type="molecule type" value="Genomic_DNA"/>
</dbReference>
<dbReference type="RefSeq" id="WP_012092477.1">
    <property type="nucleotide sequence ID" value="NC_009667.1"/>
</dbReference>
<dbReference type="SMR" id="A6X2G7"/>
<dbReference type="STRING" id="439375.Oant_2709"/>
<dbReference type="CAZy" id="AA3">
    <property type="family name" value="Auxiliary Activities 3"/>
</dbReference>
<dbReference type="KEGG" id="oan:Oant_2709"/>
<dbReference type="PATRIC" id="fig|439375.7.peg.2857"/>
<dbReference type="eggNOG" id="COG2303">
    <property type="taxonomic scope" value="Bacteria"/>
</dbReference>
<dbReference type="HOGENOM" id="CLU_002865_7_1_5"/>
<dbReference type="PhylomeDB" id="A6X2G7"/>
<dbReference type="UniPathway" id="UPA00529">
    <property type="reaction ID" value="UER00385"/>
</dbReference>
<dbReference type="Proteomes" id="UP000002301">
    <property type="component" value="Chromosome 1"/>
</dbReference>
<dbReference type="GO" id="GO:0008802">
    <property type="term" value="F:betaine-aldehyde dehydrogenase (NAD+) activity"/>
    <property type="evidence" value="ECO:0007669"/>
    <property type="project" value="UniProtKB-EC"/>
</dbReference>
<dbReference type="GO" id="GO:0008812">
    <property type="term" value="F:choline dehydrogenase activity"/>
    <property type="evidence" value="ECO:0007669"/>
    <property type="project" value="UniProtKB-UniRule"/>
</dbReference>
<dbReference type="GO" id="GO:0050660">
    <property type="term" value="F:flavin adenine dinucleotide binding"/>
    <property type="evidence" value="ECO:0007669"/>
    <property type="project" value="InterPro"/>
</dbReference>
<dbReference type="GO" id="GO:0019285">
    <property type="term" value="P:glycine betaine biosynthetic process from choline"/>
    <property type="evidence" value="ECO:0007669"/>
    <property type="project" value="UniProtKB-UniRule"/>
</dbReference>
<dbReference type="Gene3D" id="3.50.50.60">
    <property type="entry name" value="FAD/NAD(P)-binding domain"/>
    <property type="match status" value="1"/>
</dbReference>
<dbReference type="Gene3D" id="3.30.560.10">
    <property type="entry name" value="Glucose Oxidase, domain 3"/>
    <property type="match status" value="1"/>
</dbReference>
<dbReference type="HAMAP" id="MF_00750">
    <property type="entry name" value="Choline_dehydrogen"/>
    <property type="match status" value="1"/>
</dbReference>
<dbReference type="InterPro" id="IPR011533">
    <property type="entry name" value="BetA"/>
</dbReference>
<dbReference type="InterPro" id="IPR036188">
    <property type="entry name" value="FAD/NAD-bd_sf"/>
</dbReference>
<dbReference type="InterPro" id="IPR012132">
    <property type="entry name" value="GMC_OxRdtase"/>
</dbReference>
<dbReference type="InterPro" id="IPR000172">
    <property type="entry name" value="GMC_OxRdtase_N"/>
</dbReference>
<dbReference type="InterPro" id="IPR007867">
    <property type="entry name" value="GMC_OxRtase_C"/>
</dbReference>
<dbReference type="NCBIfam" id="TIGR01810">
    <property type="entry name" value="betA"/>
    <property type="match status" value="1"/>
</dbReference>
<dbReference type="NCBIfam" id="NF002550">
    <property type="entry name" value="PRK02106.1"/>
    <property type="match status" value="1"/>
</dbReference>
<dbReference type="PANTHER" id="PTHR11552:SF147">
    <property type="entry name" value="CHOLINE DEHYDROGENASE, MITOCHONDRIAL"/>
    <property type="match status" value="1"/>
</dbReference>
<dbReference type="PANTHER" id="PTHR11552">
    <property type="entry name" value="GLUCOSE-METHANOL-CHOLINE GMC OXIDOREDUCTASE"/>
    <property type="match status" value="1"/>
</dbReference>
<dbReference type="Pfam" id="PF05199">
    <property type="entry name" value="GMC_oxred_C"/>
    <property type="match status" value="1"/>
</dbReference>
<dbReference type="Pfam" id="PF00732">
    <property type="entry name" value="GMC_oxred_N"/>
    <property type="match status" value="1"/>
</dbReference>
<dbReference type="PIRSF" id="PIRSF000137">
    <property type="entry name" value="Alcohol_oxidase"/>
    <property type="match status" value="1"/>
</dbReference>
<dbReference type="SUPFAM" id="SSF54373">
    <property type="entry name" value="FAD-linked reductases, C-terminal domain"/>
    <property type="match status" value="1"/>
</dbReference>
<dbReference type="SUPFAM" id="SSF51905">
    <property type="entry name" value="FAD/NAD(P)-binding domain"/>
    <property type="match status" value="1"/>
</dbReference>
<dbReference type="PROSITE" id="PS00623">
    <property type="entry name" value="GMC_OXRED_1"/>
    <property type="match status" value="1"/>
</dbReference>
<dbReference type="PROSITE" id="PS00624">
    <property type="entry name" value="GMC_OXRED_2"/>
    <property type="match status" value="1"/>
</dbReference>